<accession>Q6SEH5</accession>
<keyword id="KW-0539">Nucleus</keyword>
<keyword id="KW-1185">Reference proteome</keyword>
<dbReference type="EMBL" id="AY459387">
    <property type="protein sequence ID" value="AAS15728.1"/>
    <property type="molecule type" value="Genomic_DNA"/>
</dbReference>
<dbReference type="RefSeq" id="XP_004065008.1">
    <property type="nucleotide sequence ID" value="XM_004064960.1"/>
</dbReference>
<dbReference type="RefSeq" id="XP_018875380.1">
    <property type="nucleotide sequence ID" value="XM_019019835.2"/>
</dbReference>
<dbReference type="SMR" id="Q6SEH5"/>
<dbReference type="FunCoup" id="Q6SEH5">
    <property type="interactions" value="786"/>
</dbReference>
<dbReference type="GeneID" id="101134502"/>
<dbReference type="KEGG" id="ggo:101134502"/>
<dbReference type="CTD" id="23641"/>
<dbReference type="eggNOG" id="ENOG502T19P">
    <property type="taxonomic scope" value="Eukaryota"/>
</dbReference>
<dbReference type="HOGENOM" id="CLU_154949_0_0_1"/>
<dbReference type="InParanoid" id="Q6SEH5"/>
<dbReference type="OrthoDB" id="13386at9604"/>
<dbReference type="Proteomes" id="UP000001519">
    <property type="component" value="Unplaced"/>
</dbReference>
<dbReference type="GO" id="GO:0005634">
    <property type="term" value="C:nucleus"/>
    <property type="evidence" value="ECO:0007669"/>
    <property type="project" value="UniProtKB-SubCell"/>
</dbReference>
<dbReference type="GO" id="GO:0071222">
    <property type="term" value="P:cellular response to lipopolysaccharide"/>
    <property type="evidence" value="ECO:0000250"/>
    <property type="project" value="UniProtKB"/>
</dbReference>
<dbReference type="GO" id="GO:0071225">
    <property type="term" value="P:cellular response to muramyl dipeptide"/>
    <property type="evidence" value="ECO:0000250"/>
    <property type="project" value="UniProtKB"/>
</dbReference>
<dbReference type="InterPro" id="IPR032549">
    <property type="entry name" value="DUF4939"/>
</dbReference>
<dbReference type="Pfam" id="PF16297">
    <property type="entry name" value="DUF4939"/>
    <property type="match status" value="1"/>
</dbReference>
<proteinExistence type="inferred from homology"/>
<protein>
    <recommendedName>
        <fullName>Protein LDOC1</fullName>
    </recommendedName>
</protein>
<organism>
    <name type="scientific">Gorilla gorilla gorilla</name>
    <name type="common">Western lowland gorilla</name>
    <dbReference type="NCBI Taxonomy" id="9595"/>
    <lineage>
        <taxon>Eukaryota</taxon>
        <taxon>Metazoa</taxon>
        <taxon>Chordata</taxon>
        <taxon>Craniata</taxon>
        <taxon>Vertebrata</taxon>
        <taxon>Euteleostomi</taxon>
        <taxon>Mammalia</taxon>
        <taxon>Eutheria</taxon>
        <taxon>Euarchontoglires</taxon>
        <taxon>Primates</taxon>
        <taxon>Haplorrhini</taxon>
        <taxon>Catarrhini</taxon>
        <taxon>Hominidae</taxon>
        <taxon>Gorilla</taxon>
    </lineage>
</organism>
<evidence type="ECO:0000250" key="1"/>
<evidence type="ECO:0000250" key="2">
    <source>
        <dbReference type="UniProtKB" id="O95751"/>
    </source>
</evidence>
<evidence type="ECO:0000305" key="3"/>
<comment type="function">
    <text evidence="1">May have an important role in the development and/or progression of some cancers.</text>
</comment>
<comment type="subunit">
    <text evidence="2">Interacts with NOD2.</text>
</comment>
<comment type="subcellular location">
    <subcellularLocation>
        <location evidence="1">Nucleus</location>
    </subcellularLocation>
</comment>
<comment type="similarity">
    <text evidence="3">Belongs to the LDOC1 family.</text>
</comment>
<feature type="chain" id="PRO_0000084390" description="Protein LDOC1">
    <location>
        <begin position="1"/>
        <end position="145"/>
    </location>
</feature>
<name>LDOC1_GORGO</name>
<reference key="1">
    <citation type="journal article" date="2004" name="Proc. Natl. Acad. Sci. U.S.A.">
        <title>The SPANX gene family of cancer/testis-specific antigens: rapid evolution and amplification in African great apes and hominids.</title>
        <authorList>
            <person name="Kouprina N."/>
            <person name="Mullokandov M."/>
            <person name="Rogozin I.B."/>
            <person name="Collins N.K."/>
            <person name="Solomon G."/>
            <person name="Otstot J."/>
            <person name="Risinger J.I."/>
            <person name="Koonin E.V."/>
            <person name="Barrett J.C."/>
            <person name="Larionov V."/>
        </authorList>
    </citation>
    <scope>NUCLEOTIDE SEQUENCE [GENOMIC DNA]</scope>
</reference>
<sequence length="145" mass="16839">MVDELVLLLHALLMRHRALSIENSQLMEQLRLLVCERASLLRQVRPPSCPVPFPETFNGESSRLPEFIVQTASYMLVNENRFCNDAMKVAFLISLLTGEAEEWVVPYIEMDSPILGDYRAFLDEMKQCFGWDDDEDDDDEEEDDY</sequence>
<gene>
    <name type="primary">LDOC1</name>
</gene>